<sequence>MGSVKSAGLSLLLLSFLLYVADSYPNTDLSNMGCEACTLRKNTVFSRDRPIYQCMGCCFSRAYPTPLKAMKTMTIPKNITSEATCCVAKHVYETEVAGIRVRNHTDCHCSTCYYHKI</sequence>
<gene>
    <name type="primary">cga</name>
</gene>
<comment type="function">
    <text evidence="3">Shared alpha chain of heterodimeric glycoprotein hormones. These hormones bind specific receptors on target cells that in turn activate downstream signaling pathways. Involved in gametogenesis and steroidogenesis.</text>
</comment>
<comment type="subunit">
    <text evidence="3">Heterodimer. Glycoprotein hormones are heterodimers composed of a common alpha chain described here and a unique beta chain which confers their biological specificity to the different hormones.</text>
</comment>
<comment type="subcellular location">
    <subcellularLocation>
        <location evidence="3">Secreted</location>
    </subcellularLocation>
</comment>
<comment type="similarity">
    <text evidence="4">Belongs to the glycoprotein hormones subunit alpha family.</text>
</comment>
<proteinExistence type="inferred from homology"/>
<protein>
    <recommendedName>
        <fullName>Glycoprotein hormones alpha chain</fullName>
    </recommendedName>
    <alternativeName>
        <fullName>GTH-alpha</fullName>
    </alternativeName>
    <alternativeName>
        <fullName>Gonadotropin alpha chain</fullName>
    </alternativeName>
</protein>
<evidence type="ECO:0000250" key="1"/>
<evidence type="ECO:0000250" key="2">
    <source>
        <dbReference type="UniProtKB" id="P01215"/>
    </source>
</evidence>
<evidence type="ECO:0000250" key="3">
    <source>
        <dbReference type="UniProtKB" id="P37204"/>
    </source>
</evidence>
<evidence type="ECO:0000305" key="4"/>
<organism>
    <name type="scientific">Acanthopagrus latus</name>
    <name type="common">Yellowfin seabream</name>
    <name type="synonym">Sparus latus</name>
    <dbReference type="NCBI Taxonomy" id="8177"/>
    <lineage>
        <taxon>Eukaryota</taxon>
        <taxon>Metazoa</taxon>
        <taxon>Chordata</taxon>
        <taxon>Craniata</taxon>
        <taxon>Vertebrata</taxon>
        <taxon>Euteleostomi</taxon>
        <taxon>Actinopterygii</taxon>
        <taxon>Neopterygii</taxon>
        <taxon>Teleostei</taxon>
        <taxon>Neoteleostei</taxon>
        <taxon>Acanthomorphata</taxon>
        <taxon>Eupercaria</taxon>
        <taxon>Spariformes</taxon>
        <taxon>Sparidae</taxon>
        <taxon>Acanthopagrus</taxon>
    </lineage>
</organism>
<reference key="1">
    <citation type="submission" date="1992-06" db="EMBL/GenBank/DDBJ databases">
        <title>Molecular cloning and sequencing of yellowfin porgy gonadotropin alpha-subunit cDNA.</title>
        <authorList>
            <person name="Tsai H.J."/>
            <person name="Chen Y.L."/>
        </authorList>
    </citation>
    <scope>NUCLEOTIDE SEQUENCE [MRNA]</scope>
</reference>
<accession>P30970</accession>
<feature type="signal peptide" evidence="1">
    <location>
        <begin position="1"/>
        <end position="23"/>
    </location>
</feature>
<feature type="chain" id="PRO_0000011659" description="Glycoprotein hormones alpha chain">
    <location>
        <begin position="24"/>
        <end position="117"/>
    </location>
</feature>
<feature type="glycosylation site" description="N-linked (GlcNAc...) asparagine" evidence="2">
    <location>
        <position position="78"/>
    </location>
</feature>
<feature type="glycosylation site" description="N-linked (GlcNAc...) asparagine" evidence="2">
    <location>
        <position position="103"/>
    </location>
</feature>
<feature type="disulfide bond" evidence="2">
    <location>
        <begin position="34"/>
        <end position="57"/>
    </location>
</feature>
<feature type="disulfide bond" evidence="2">
    <location>
        <begin position="37"/>
        <end position="86"/>
    </location>
</feature>
<feature type="disulfide bond" evidence="2">
    <location>
        <begin position="54"/>
        <end position="107"/>
    </location>
</feature>
<feature type="disulfide bond" evidence="2">
    <location>
        <begin position="58"/>
        <end position="109"/>
    </location>
</feature>
<feature type="disulfide bond" evidence="2">
    <location>
        <begin position="85"/>
        <end position="112"/>
    </location>
</feature>
<name>GLHA_ACALA</name>
<keyword id="KW-1015">Disulfide bond</keyword>
<keyword id="KW-0325">Glycoprotein</keyword>
<keyword id="KW-0372">Hormone</keyword>
<keyword id="KW-0964">Secreted</keyword>
<keyword id="KW-0732">Signal</keyword>
<dbReference type="EMBL" id="M94038">
    <property type="protein sequence ID" value="AAA48513.1"/>
    <property type="molecule type" value="mRNA"/>
</dbReference>
<dbReference type="SMR" id="P30970"/>
<dbReference type="GlyCosmos" id="P30970">
    <property type="glycosylation" value="2 sites, No reported glycans"/>
</dbReference>
<dbReference type="GO" id="GO:0005615">
    <property type="term" value="C:extracellular space"/>
    <property type="evidence" value="ECO:0000250"/>
    <property type="project" value="UniProtKB"/>
</dbReference>
<dbReference type="GO" id="GO:0016914">
    <property type="term" value="C:follicle-stimulating hormone complex"/>
    <property type="evidence" value="ECO:0000250"/>
    <property type="project" value="UniProtKB"/>
</dbReference>
<dbReference type="GO" id="GO:0016913">
    <property type="term" value="F:follicle-stimulating hormone activity"/>
    <property type="evidence" value="ECO:0000250"/>
    <property type="project" value="UniProtKB"/>
</dbReference>
<dbReference type="GO" id="GO:0007186">
    <property type="term" value="P:G protein-coupled receptor signaling pathway"/>
    <property type="evidence" value="ECO:0000250"/>
    <property type="project" value="UniProtKB"/>
</dbReference>
<dbReference type="GO" id="GO:0010893">
    <property type="term" value="P:positive regulation of steroid biosynthetic process"/>
    <property type="evidence" value="ECO:0000250"/>
    <property type="project" value="UniProtKB"/>
</dbReference>
<dbReference type="GO" id="GO:0010469">
    <property type="term" value="P:regulation of signaling receptor activity"/>
    <property type="evidence" value="ECO:0000250"/>
    <property type="project" value="UniProtKB"/>
</dbReference>
<dbReference type="GO" id="GO:0006590">
    <property type="term" value="P:thyroid hormone generation"/>
    <property type="evidence" value="ECO:0007669"/>
    <property type="project" value="TreeGrafter"/>
</dbReference>
<dbReference type="FunFam" id="2.10.90.10:FF:000011">
    <property type="entry name" value="Glycoprotein hormones alpha chain"/>
    <property type="match status" value="1"/>
</dbReference>
<dbReference type="Gene3D" id="2.10.90.10">
    <property type="entry name" value="Cystine-knot cytokines"/>
    <property type="match status" value="1"/>
</dbReference>
<dbReference type="InterPro" id="IPR029034">
    <property type="entry name" value="Cystine-knot_cytokine"/>
</dbReference>
<dbReference type="InterPro" id="IPR000476">
    <property type="entry name" value="Glyco_hormone"/>
</dbReference>
<dbReference type="PANTHER" id="PTHR11509">
    <property type="entry name" value="GLYCOPROTEIN HORMONE ALPHA CHAIN"/>
    <property type="match status" value="1"/>
</dbReference>
<dbReference type="PANTHER" id="PTHR11509:SF0">
    <property type="entry name" value="GLYCOPROTEIN HORMONES ALPHA CHAIN"/>
    <property type="match status" value="1"/>
</dbReference>
<dbReference type="Pfam" id="PF00236">
    <property type="entry name" value="Hormone_6"/>
    <property type="match status" value="1"/>
</dbReference>
<dbReference type="PRINTS" id="PR00274">
    <property type="entry name" value="GLYCOHORMONE"/>
</dbReference>
<dbReference type="SMART" id="SM00067">
    <property type="entry name" value="GHA"/>
    <property type="match status" value="1"/>
</dbReference>
<dbReference type="SUPFAM" id="SSF57501">
    <property type="entry name" value="Cystine-knot cytokines"/>
    <property type="match status" value="1"/>
</dbReference>
<dbReference type="PROSITE" id="PS00779">
    <property type="entry name" value="GLYCO_HORMONE_ALPHA_1"/>
    <property type="match status" value="1"/>
</dbReference>
<dbReference type="PROSITE" id="PS00780">
    <property type="entry name" value="GLYCO_HORMONE_ALPHA_2"/>
    <property type="match status" value="1"/>
</dbReference>
<dbReference type="PROSITE" id="PS50277">
    <property type="entry name" value="GLYCO_HORMONE_ALPHA_3"/>
    <property type="match status" value="1"/>
</dbReference>